<feature type="chain" id="PRO_0000455102" description="N-succinylamino acid racemase">
    <location>
        <begin position="1"/>
        <end position="368"/>
    </location>
</feature>
<feature type="active site" description="Proton donor" evidence="12 13">
    <location>
        <position position="163"/>
    </location>
</feature>
<feature type="active site" description="Proton acceptor" evidence="12 13">
    <location>
        <position position="263"/>
    </location>
</feature>
<feature type="binding site" evidence="3 18">
    <location>
        <position position="135"/>
    </location>
    <ligand>
        <name>2-succinylbenzoate</name>
        <dbReference type="ChEBI" id="CHEBI:18325"/>
    </ligand>
</feature>
<feature type="binding site" evidence="3 18">
    <location>
        <begin position="161"/>
        <end position="163"/>
    </location>
    <ligand>
        <name>2-succinylbenzoate</name>
        <dbReference type="ChEBI" id="CHEBI:18325"/>
    </ligand>
</feature>
<feature type="binding site" evidence="3 4 7 17 18 19 21 22 23 24 25 26">
    <location>
        <position position="189"/>
    </location>
    <ligand>
        <name>Mg(2+)</name>
        <dbReference type="ChEBI" id="CHEBI:18420"/>
    </ligand>
</feature>
<feature type="binding site" evidence="3 18">
    <location>
        <position position="191"/>
    </location>
    <ligand>
        <name>2-succinylbenzoate</name>
        <dbReference type="ChEBI" id="CHEBI:18325"/>
    </ligand>
</feature>
<feature type="binding site" evidence="3 4 7 17 18 19 21 22 23 24 25 26">
    <location>
        <position position="214"/>
    </location>
    <ligand>
        <name>Mg(2+)</name>
        <dbReference type="ChEBI" id="CHEBI:18420"/>
    </ligand>
</feature>
<feature type="binding site" evidence="3 4 7 17 18 19 21 22 23 24 25 26">
    <location>
        <position position="239"/>
    </location>
    <ligand>
        <name>Mg(2+)</name>
        <dbReference type="ChEBI" id="CHEBI:18420"/>
    </ligand>
</feature>
<feature type="binding site" evidence="3 18">
    <location>
        <position position="293"/>
    </location>
    <ligand>
        <name>2-succinylbenzoate</name>
        <dbReference type="ChEBI" id="CHEBI:18325"/>
    </ligand>
</feature>
<feature type="mutagenesis site" description="Small increase in OSBS catalytic efficiency and 2-fold decrease in NSAR catalytic efficiency." evidence="5">
    <original>P</original>
    <variation>A</variation>
    <location>
        <position position="18"/>
    </location>
</feature>
<feature type="mutagenesis site" description="200-fold decrease in OSBS catalytic efficiency and 120-fold decrease in NSAR catalytic efficiency. 2100-fold decrease in OSBS catalytic efficiency and 180-fold decrease in NSAR catalytic efficiency; when associated with A-23." evidence="5">
    <original>F</original>
    <variation>A</variation>
    <location>
        <position position="19"/>
    </location>
</feature>
<feature type="mutagenesis site" description="32-fold decrease in OSBS catalytic efficiency and 8-fold decrease in NSAR catalytic efficiency." evidence="5">
    <original>R</original>
    <variation>E</variation>
    <location>
        <position position="20"/>
    </location>
</feature>
<feature type="mutagenesis site" description="4-fold decrease in OSBS and NSAR catalytic efficiencies." evidence="5">
    <original>T</original>
    <variation>A</variation>
    <location>
        <position position="21"/>
    </location>
</feature>
<feature type="mutagenesis site" description="3-fold increase in OSBS catalytic efficiency and 4-fold decrease in NSAR catalytic efficiency." evidence="5">
    <original>S</original>
    <variation>R</variation>
    <location>
        <position position="22"/>
    </location>
</feature>
<feature type="mutagenesis site" description="2100-fold decrease in OSBS catalytic efficiency and 180-fold decrease in NSAR catalytic efficiency; when associated with A-19." evidence="5">
    <original>F</original>
    <variation>A</variation>
    <location>
        <position position="23"/>
    </location>
</feature>
<feature type="mutagenesis site" description="Small decrease in OSBS catalytic efficiency and 4-fold decrease in NSAR catalytic efficiency." evidence="5">
    <original>G</original>
    <variation>A</variation>
    <location>
        <position position="24"/>
    </location>
</feature>
<feature type="mutagenesis site" description="3-fold decrease in OSBS and NSAR catalytic efficiencies." evidence="5">
    <original>D</original>
    <variation>R</variation>
    <location>
        <position position="140"/>
    </location>
</feature>
<feature type="mutagenesis site" description="Significantly impairs both NAAAR and OSBS activities." evidence="1 2">
    <original>K</original>
    <variation>A</variation>
    <variation>R</variation>
    <variation>S</variation>
    <location>
        <position position="163"/>
    </location>
</feature>
<feature type="mutagenesis site" description="Significantly impairs both NAAAR and OSBS activities." evidence="1 2">
    <original>K</original>
    <variation>R</variation>
    <variation>S</variation>
    <location>
        <position position="263"/>
    </location>
</feature>
<feature type="mutagenesis site" description="Shows up to 6-fold higher activity than the wild-type on a range of N-acetylated amino acids; when associated with Y-323." evidence="4">
    <original>G</original>
    <variation>D</variation>
    <location>
        <position position="291"/>
    </location>
</feature>
<feature type="mutagenesis site" description="Shows up to 6-fold higher activity than the wild-type on a range of N-acetylated amino acids; when associated with D-291." evidence="4">
    <original>F</original>
    <variation>Y</variation>
    <location>
        <position position="323"/>
    </location>
</feature>
<feature type="sequence conflict" description="In Ref. 2; AA sequence." evidence="11" ref="2">
    <original>F</original>
    <variation>P</variation>
    <location>
        <position position="23"/>
    </location>
</feature>
<feature type="strand" evidence="27">
    <location>
        <begin position="5"/>
        <end position="21"/>
    </location>
</feature>
<feature type="strand" evidence="27">
    <location>
        <begin position="24"/>
        <end position="37"/>
    </location>
</feature>
<feature type="strand" evidence="27">
    <location>
        <begin position="42"/>
        <end position="46"/>
    </location>
</feature>
<feature type="strand" evidence="27">
    <location>
        <begin position="50"/>
        <end position="57"/>
    </location>
</feature>
<feature type="helix" evidence="27">
    <location>
        <begin position="60"/>
        <end position="69"/>
    </location>
</feature>
<feature type="helix" evidence="27">
    <location>
        <begin position="71"/>
        <end position="77"/>
    </location>
</feature>
<feature type="strand" evidence="27">
    <location>
        <begin position="78"/>
        <end position="80"/>
    </location>
</feature>
<feature type="helix" evidence="27">
    <location>
        <begin position="83"/>
        <end position="90"/>
    </location>
</feature>
<feature type="helix" evidence="27">
    <location>
        <begin position="97"/>
        <end position="114"/>
    </location>
</feature>
<feature type="helix" evidence="27">
    <location>
        <begin position="119"/>
        <end position="123"/>
    </location>
</feature>
<feature type="strand" evidence="27">
    <location>
        <begin position="128"/>
        <end position="136"/>
    </location>
</feature>
<feature type="helix" evidence="27">
    <location>
        <begin position="142"/>
        <end position="155"/>
    </location>
</feature>
<feature type="strand" evidence="27">
    <location>
        <begin position="158"/>
        <end position="163"/>
    </location>
</feature>
<feature type="helix" evidence="27">
    <location>
        <begin position="170"/>
        <end position="180"/>
    </location>
</feature>
<feature type="strand" evidence="27">
    <location>
        <begin position="184"/>
        <end position="189"/>
    </location>
</feature>
<feature type="helix" evidence="27">
    <location>
        <begin position="196"/>
        <end position="198"/>
    </location>
</feature>
<feature type="helix" evidence="27">
    <location>
        <begin position="199"/>
        <end position="203"/>
    </location>
</feature>
<feature type="helix" evidence="27">
    <location>
        <begin position="204"/>
        <end position="208"/>
    </location>
</feature>
<feature type="strand" evidence="27">
    <location>
        <begin position="211"/>
        <end position="214"/>
    </location>
</feature>
<feature type="helix" evidence="27">
    <location>
        <begin position="222"/>
        <end position="229"/>
    </location>
</feature>
<feature type="strand" evidence="27">
    <location>
        <begin position="236"/>
        <end position="239"/>
    </location>
</feature>
<feature type="helix" evidence="27">
    <location>
        <begin position="245"/>
        <end position="253"/>
    </location>
</feature>
<feature type="strand" evidence="27">
    <location>
        <begin position="258"/>
        <end position="262"/>
    </location>
</feature>
<feature type="turn" evidence="27">
    <location>
        <begin position="264"/>
        <end position="268"/>
    </location>
</feature>
<feature type="helix" evidence="27">
    <location>
        <begin position="270"/>
        <end position="282"/>
    </location>
</feature>
<feature type="strand" evidence="27">
    <location>
        <begin position="287"/>
        <end position="289"/>
    </location>
</feature>
<feature type="helix" evidence="27">
    <location>
        <begin position="296"/>
        <end position="306"/>
    </location>
</feature>
<feature type="helix" evidence="27">
    <location>
        <begin position="320"/>
        <end position="322"/>
    </location>
</feature>
<feature type="strand" evidence="28">
    <location>
        <begin position="324"/>
        <end position="326"/>
    </location>
</feature>
<feature type="strand" evidence="27">
    <location>
        <begin position="328"/>
        <end position="330"/>
    </location>
</feature>
<feature type="strand" evidence="27">
    <location>
        <begin position="335"/>
        <end position="340"/>
    </location>
</feature>
<feature type="strand" evidence="27">
    <location>
        <begin position="344"/>
        <end position="346"/>
    </location>
</feature>
<feature type="helix" evidence="27">
    <location>
        <begin position="353"/>
        <end position="359"/>
    </location>
</feature>
<feature type="strand" evidence="27">
    <location>
        <begin position="360"/>
        <end position="366"/>
    </location>
</feature>
<comment type="function">
    <text evidence="1 2 4 5 6 14 15">Acts as a N-succinylamino acid racemase (NSAR) that catalyzes the racemization of N-succinyl-phenylglycine and N-succinyl-methionine (PubMed:14705949, PubMed:24955846). Can catalyze the racemization of a broad range of N-acylamino acids, including N-acetyl-D/L-methionine, N-propionyl-D/L-methionine, N-butyryl-D/L-methionine and N-chloroacetyl-L-valine (PubMed:10194342, PubMed:14705949, PubMed:23130969, PubMed:7766084). Also converts 2-succinyl-6-hydroxy-2,4-cyclohexadiene-1-carboxylate (SHCHC) to 2-succinylbenzoate (OSB) (PubMed:10194342, PubMed:14705949, PubMed:24955846). Catalyzes both N-succinylamino acid racemization and OSB synthesis at equivalent rates (PubMed:14705949, PubMed:24955846). NSAR is probably the biological function of this enzyme (Probable).</text>
</comment>
<comment type="catalytic activity">
    <reaction evidence="1 2 4 6">
        <text>N-acetyl-D-methionine = N-acetyl-L-methionine</text>
        <dbReference type="Rhea" id="RHEA:59960"/>
        <dbReference type="ChEBI" id="CHEBI:71670"/>
        <dbReference type="ChEBI" id="CHEBI:85220"/>
    </reaction>
</comment>
<comment type="catalytic activity">
    <reaction evidence="1 2 5">
        <text>(1R,6R)-6-hydroxy-2-succinyl-cyclohexa-2,4-diene-1-carboxylate = 2-succinylbenzoate + H2O</text>
        <dbReference type="Rhea" id="RHEA:10196"/>
        <dbReference type="ChEBI" id="CHEBI:15377"/>
        <dbReference type="ChEBI" id="CHEBI:18325"/>
        <dbReference type="ChEBI" id="CHEBI:58689"/>
        <dbReference type="EC" id="4.2.1.113"/>
    </reaction>
</comment>
<comment type="cofactor">
    <cofactor evidence="6">
        <name>a divalent metal cation</name>
        <dbReference type="ChEBI" id="CHEBI:60240"/>
    </cofactor>
    <text evidence="3 6">Binds 1 divalent metal cation per subunit (PubMed:15134446). Enhanced by the addition of divalent metal ions such as Co(2+), Mn(2+) and Fe(2+) (PubMed:7766084).</text>
</comment>
<comment type="activity regulation">
    <text evidence="1 6">Inhibited by EDTA and sulfhydryl reagents such as p-chloromercuribenzoic acid (PubMed:7766084). Both OSBS and NAAAR activities are inhibited competitively by salicylhydroxamate (PubMed:10194342).</text>
</comment>
<comment type="biophysicochemical properties">
    <kinetics>
        <KM evidence="2">6.5 mM for N-succinyl-R-methionine</KM>
        <KM evidence="2">5.9 mM for N-succinyl-S-methionine</KM>
        <KM evidence="2">0.94 mM for N-succinyl-R-phenylglycine</KM>
        <KM evidence="2">0.95 mM for N-succinyl-S-phenylglycine</KM>
        <KM evidence="5">1 mM for N-succinyl-L-phenylglycine</KM>
        <KM evidence="6">18.5 mM for N-acetyl-L-methionine</KM>
        <KM evidence="4">18 mM for N-acetyl-L-methionine</KM>
        <KM evidence="6">11.3 mM for N-acetyl-D-methionine</KM>
        <KM evidence="4">40 mM for N-acetyl-D-methionine</KM>
        <KM evidence="2">9.8 mM for N-acetyl-R-methionine</KM>
        <KM evidence="2">11 mM for N-acetyl-S-methionine</KM>
        <KM evidence="4">35 mM for N-acetyl-D-(4-fluoro)phenylglycine</KM>
        <KM evidence="2">0.48 mM for SHCHC</KM>
        <KM evidence="5">0.55 mM for SHCHC</KM>
        <text evidence="1 2 4 5">kcat is 110 sec(-1) with N-succinyl-R/S-methionine as substrate (PubMed:14705949). kcat is 190 sec(-1) with N-succinyl-R/S-phenylglycine as substrate (PubMed:14705949). kcat is 42 sec(-1) with N-succinyl-L-phenylglycine as substrate (PubMed:24955846). kcat is 20 sec(-1) with N-acetyl-L-methionine as substrate (PubMed:23130969). kcat is 14 sec(-1) with N-acetyl-D-methionine as substrate (PubMed:23130969). kcat is 4.8 sec(-1) with N-acetyl-R-methionine as substrate (PubMed:14705949). kcat is 6.4 sec(-1) with N-acetyl-S-methionine as substrate (PubMed:14705949). kcat is 11.7 sec(-1) with N-acetyl-S-methionine as substrate (PubMed:10194342). kcat is 41 sec(-1) with N-acetyl-D-(4-fluoro)phenylglycine as substrate (PubMed:23130969). kcat is 97 sec(-1) with N-acetyl-allylglycine as substrate (PubMed:23130969). kcat is 120 sec(-1) with SHCHC as substrate (PubMed:10194342, PubMed:14705949). kcat is 46 sec(-1) with SHCHC as substrate (PubMed:24955846).</text>
    </kinetics>
    <phDependence>
        <text evidence="6">Optimum pH is 7.5.</text>
    </phDependence>
    <temperatureDependence>
        <text evidence="6">Optimum temperature is 50 degrees Celsius. Stable at 55 degrees Celsius for 30 minutes.</text>
    </temperatureDependence>
</comment>
<comment type="subunit">
    <text evidence="3 6">Homooctamer.</text>
</comment>
<comment type="domain">
    <text evidence="3">The active-site cavity can accommodate both the hydrophobic substrate for the OSBS reaction and the substrates for the racemase activity. Accommodation of the components of the N-acyl linkage appears to be the reason that this enzyme is capable of a racemization reaction on these substrates, whereas the orthologous OSBS from E.coli lacks this functionality.</text>
</comment>
<comment type="biotechnology">
    <text evidence="4">Variants with increased racemase activity could be used on an industrial scale for the production of enantiomerically pure alpha-amino acids.</text>
</comment>
<comment type="similarity">
    <text evidence="11">Belongs to the mandelate racemase/muconate lactonizing enzyme family. MenC type 2 subfamily.</text>
</comment>
<gene>
    <name evidence="16" type="primary">Aaar</name>
</gene>
<keyword id="KW-0002">3D-structure</keyword>
<keyword id="KW-0903">Direct protein sequencing</keyword>
<keyword id="KW-0413">Isomerase</keyword>
<keyword id="KW-0456">Lyase</keyword>
<keyword id="KW-0460">Magnesium</keyword>
<keyword id="KW-0479">Metal-binding</keyword>
<organism>
    <name type="scientific">Amycolatopsis sp</name>
    <dbReference type="NCBI Taxonomy" id="37632"/>
    <lineage>
        <taxon>Bacteria</taxon>
        <taxon>Bacillati</taxon>
        <taxon>Actinomycetota</taxon>
        <taxon>Actinomycetes</taxon>
        <taxon>Pseudonocardiales</taxon>
        <taxon>Pseudonocardiaceae</taxon>
        <taxon>Amycolatopsis</taxon>
    </lineage>
</organism>
<sequence>MKLSGVELRRVQMPLVAPFRTSFGTQSVRELLLLRAVTPAGEGWGECVTMAGPLYSSEYNDGAEHVLRHYLIPALLAAEDITAAKVTPLLAKFKGHRMAKGALEMAVLDAELRAHERSFAAELGSVRDSVPCGVSVGIMDTIPQLLDVVGGYLDEGYVRIKLKIEPGWDVEPVRAVRERFGDDVLLQVDANTAYTLGDAPQLARLDPFGLLLIEQPLEEEDVLGHAELARRIQTPICLDESIVSARAAADAIKLGAVQIVNIKPGRVGGYLEARRVHDVCAAHGIPVWCGGMIETGLGRAANVALASLPNFTLPGDTSASDRFYKTDITEPFVLSGGHLPVPTGPGLGVAPIPELLDEVTTAKVWIGS</sequence>
<dbReference type="EC" id="5.1.1.-" evidence="2 5 1 4 6"/>
<dbReference type="EC" id="4.2.1.113" evidence="1 2 5"/>
<dbReference type="EMBL" id="D30738">
    <property type="protein sequence ID" value="BAA06400.1"/>
    <property type="molecule type" value="Genomic_DNA"/>
</dbReference>
<dbReference type="PIR" id="I39598">
    <property type="entry name" value="I39598"/>
</dbReference>
<dbReference type="PDB" id="1SJA">
    <property type="method" value="X-ray"/>
    <property type="resolution" value="2.30 A"/>
    <property type="chains" value="A/B/C/D=1-368"/>
</dbReference>
<dbReference type="PDB" id="1SJB">
    <property type="method" value="X-ray"/>
    <property type="resolution" value="2.20 A"/>
    <property type="chains" value="A/B/C/D=1-368"/>
</dbReference>
<dbReference type="PDB" id="1SJC">
    <property type="method" value="X-ray"/>
    <property type="resolution" value="2.10 A"/>
    <property type="chains" value="A/B/C/D=1-368"/>
</dbReference>
<dbReference type="PDB" id="1SJD">
    <property type="method" value="X-ray"/>
    <property type="resolution" value="1.87 A"/>
    <property type="chains" value="A/B/C/D=1-368"/>
</dbReference>
<dbReference type="PDB" id="4A6G">
    <property type="method" value="X-ray"/>
    <property type="resolution" value="2.71 A"/>
    <property type="chains" value="A/B/C/D=1-368"/>
</dbReference>
<dbReference type="PDB" id="5FJO">
    <property type="method" value="X-ray"/>
    <property type="resolution" value="2.08 A"/>
    <property type="chains" value="A/B=1-368"/>
</dbReference>
<dbReference type="PDB" id="5FJP">
    <property type="method" value="X-ray"/>
    <property type="resolution" value="2.58 A"/>
    <property type="chains" value="A/B/C/D=1-368"/>
</dbReference>
<dbReference type="PDB" id="5FJR">
    <property type="method" value="X-ray"/>
    <property type="resolution" value="2.44 A"/>
    <property type="chains" value="A/B/C/D=1-368"/>
</dbReference>
<dbReference type="PDB" id="5FJT">
    <property type="method" value="X-ray"/>
    <property type="resolution" value="2.11 A"/>
    <property type="chains" value="A/B/C/D=1-368"/>
</dbReference>
<dbReference type="PDB" id="5FJU">
    <property type="method" value="X-ray"/>
    <property type="resolution" value="2.52 A"/>
    <property type="chains" value="A/B/C/D=1-368"/>
</dbReference>
<dbReference type="PDB" id="7S8W">
    <property type="method" value="X-ray"/>
    <property type="resolution" value="2.90 A"/>
    <property type="chains" value="A/B/C/D=1-368"/>
</dbReference>
<dbReference type="PDBsum" id="1SJA"/>
<dbReference type="PDBsum" id="1SJB"/>
<dbReference type="PDBsum" id="1SJC"/>
<dbReference type="PDBsum" id="1SJD"/>
<dbReference type="PDBsum" id="4A6G"/>
<dbReference type="PDBsum" id="5FJO"/>
<dbReference type="PDBsum" id="5FJP"/>
<dbReference type="PDBsum" id="5FJR"/>
<dbReference type="PDBsum" id="5FJT"/>
<dbReference type="PDBsum" id="5FJU"/>
<dbReference type="PDBsum" id="7S8W"/>
<dbReference type="SMR" id="Q44244"/>
<dbReference type="DrugBank" id="DB01646">
    <property type="generic name" value="N-Acetylmethionine"/>
</dbReference>
<dbReference type="DrugBank" id="DB04511">
    <property type="generic name" value="N-Succinyl Methionine"/>
</dbReference>
<dbReference type="DrugBank" id="DB03299">
    <property type="generic name" value="N-Succinyl Phenylglycine"/>
</dbReference>
<dbReference type="DrugBank" id="DB02251">
    <property type="generic name" value="O-Succinylbenzoate"/>
</dbReference>
<dbReference type="BRENDA" id="4.2.1.113">
    <property type="organism ID" value="316"/>
</dbReference>
<dbReference type="SABIO-RK" id="Q44244"/>
<dbReference type="EvolutionaryTrace" id="Q44244"/>
<dbReference type="GO" id="GO:0016853">
    <property type="term" value="F:isomerase activity"/>
    <property type="evidence" value="ECO:0007669"/>
    <property type="project" value="UniProtKB-KW"/>
</dbReference>
<dbReference type="GO" id="GO:0046872">
    <property type="term" value="F:metal ion binding"/>
    <property type="evidence" value="ECO:0007669"/>
    <property type="project" value="UniProtKB-KW"/>
</dbReference>
<dbReference type="GO" id="GO:0043748">
    <property type="term" value="F:O-succinylbenzoate synthase activity"/>
    <property type="evidence" value="ECO:0007669"/>
    <property type="project" value="UniProtKB-EC"/>
</dbReference>
<dbReference type="GO" id="GO:0009234">
    <property type="term" value="P:menaquinone biosynthetic process"/>
    <property type="evidence" value="ECO:0007669"/>
    <property type="project" value="InterPro"/>
</dbReference>
<dbReference type="CDD" id="cd03317">
    <property type="entry name" value="NAAAR"/>
    <property type="match status" value="1"/>
</dbReference>
<dbReference type="Gene3D" id="3.20.20.120">
    <property type="entry name" value="Enolase-like C-terminal domain"/>
    <property type="match status" value="1"/>
</dbReference>
<dbReference type="Gene3D" id="3.30.390.10">
    <property type="entry name" value="Enolase-like, N-terminal domain"/>
    <property type="match status" value="1"/>
</dbReference>
<dbReference type="InterPro" id="IPR036849">
    <property type="entry name" value="Enolase-like_C_sf"/>
</dbReference>
<dbReference type="InterPro" id="IPR029017">
    <property type="entry name" value="Enolase-like_N"/>
</dbReference>
<dbReference type="InterPro" id="IPR029065">
    <property type="entry name" value="Enolase_C-like"/>
</dbReference>
<dbReference type="InterPro" id="IPR013342">
    <property type="entry name" value="Mandelate_racemase_C"/>
</dbReference>
<dbReference type="InterPro" id="IPR013341">
    <property type="entry name" value="Mandelate_racemase_N_dom"/>
</dbReference>
<dbReference type="InterPro" id="IPR010197">
    <property type="entry name" value="OSBS/NAAAR"/>
</dbReference>
<dbReference type="NCBIfam" id="TIGR01928">
    <property type="entry name" value="menC_lowGC_arch"/>
    <property type="match status" value="1"/>
</dbReference>
<dbReference type="PANTHER" id="PTHR48073:SF5">
    <property type="entry name" value="O-SUCCINYLBENZOATE SYNTHASE"/>
    <property type="match status" value="1"/>
</dbReference>
<dbReference type="PANTHER" id="PTHR48073">
    <property type="entry name" value="O-SUCCINYLBENZOATE SYNTHASE-RELATED"/>
    <property type="match status" value="1"/>
</dbReference>
<dbReference type="Pfam" id="PF13378">
    <property type="entry name" value="MR_MLE_C"/>
    <property type="match status" value="1"/>
</dbReference>
<dbReference type="Pfam" id="PF02746">
    <property type="entry name" value="MR_MLE_N"/>
    <property type="match status" value="1"/>
</dbReference>
<dbReference type="SFLD" id="SFLDG00180">
    <property type="entry name" value="muconate_cycloisomerase"/>
    <property type="match status" value="1"/>
</dbReference>
<dbReference type="SFLD" id="SFLDF00116">
    <property type="entry name" value="N-succinylamino_acid_racemase"/>
    <property type="match status" value="1"/>
</dbReference>
<dbReference type="SFLD" id="SFLDF00009">
    <property type="entry name" value="o-succinylbenzoate_synthase"/>
    <property type="match status" value="1"/>
</dbReference>
<dbReference type="SMART" id="SM00922">
    <property type="entry name" value="MR_MLE"/>
    <property type="match status" value="1"/>
</dbReference>
<dbReference type="SUPFAM" id="SSF51604">
    <property type="entry name" value="Enolase C-terminal domain-like"/>
    <property type="match status" value="1"/>
</dbReference>
<dbReference type="SUPFAM" id="SSF54826">
    <property type="entry name" value="Enolase N-terminal domain-like"/>
    <property type="match status" value="1"/>
</dbReference>
<protein>
    <recommendedName>
        <fullName evidence="9">N-succinylamino acid racemase</fullName>
        <shortName evidence="9">NSAR</shortName>
        <ecNumber evidence="2 5">5.1.1.-</ecNumber>
    </recommendedName>
    <alternativeName>
        <fullName evidence="10">N-acylamino acid racemase</fullName>
        <shortName evidence="10">AAR</shortName>
        <shortName evidence="8">NAAAR</shortName>
        <ecNumber evidence="1 2 4 6">5.1.1.-</ecNumber>
    </alternativeName>
    <alternativeName>
        <fullName evidence="8">o-succinylbenzoate synthase</fullName>
        <shortName evidence="11">OSB synthase</shortName>
        <shortName evidence="8">OSBS</shortName>
        <ecNumber evidence="1 2 5">4.2.1.113</ecNumber>
    </alternativeName>
</protein>
<evidence type="ECO:0000269" key="1">
    <source>
    </source>
</evidence>
<evidence type="ECO:0000269" key="2">
    <source>
    </source>
</evidence>
<evidence type="ECO:0000269" key="3">
    <source>
    </source>
</evidence>
<evidence type="ECO:0000269" key="4">
    <source>
    </source>
</evidence>
<evidence type="ECO:0000269" key="5">
    <source>
    </source>
</evidence>
<evidence type="ECO:0000269" key="6">
    <source>
    </source>
</evidence>
<evidence type="ECO:0000269" key="7">
    <source ref="9"/>
</evidence>
<evidence type="ECO:0000303" key="8">
    <source>
    </source>
</evidence>
<evidence type="ECO:0000303" key="9">
    <source>
    </source>
</evidence>
<evidence type="ECO:0000303" key="10">
    <source>
    </source>
</evidence>
<evidence type="ECO:0000305" key="11"/>
<evidence type="ECO:0000305" key="12">
    <source>
    </source>
</evidence>
<evidence type="ECO:0000305" key="13">
    <source>
    </source>
</evidence>
<evidence type="ECO:0000305" key="14">
    <source>
    </source>
</evidence>
<evidence type="ECO:0000305" key="15">
    <source>
    </source>
</evidence>
<evidence type="ECO:0000312" key="16">
    <source>
        <dbReference type="EMBL" id="BAA06400.1"/>
    </source>
</evidence>
<evidence type="ECO:0007744" key="17">
    <source>
        <dbReference type="PDB" id="1SJA"/>
    </source>
</evidence>
<evidence type="ECO:0007744" key="18">
    <source>
        <dbReference type="PDB" id="1SJB"/>
    </source>
</evidence>
<evidence type="ECO:0007744" key="19">
    <source>
        <dbReference type="PDB" id="1SJC"/>
    </source>
</evidence>
<evidence type="ECO:0007744" key="20">
    <source>
        <dbReference type="PDB" id="1SJD"/>
    </source>
</evidence>
<evidence type="ECO:0007744" key="21">
    <source>
        <dbReference type="PDB" id="4A6G"/>
    </source>
</evidence>
<evidence type="ECO:0007744" key="22">
    <source>
        <dbReference type="PDB" id="5FJO"/>
    </source>
</evidence>
<evidence type="ECO:0007744" key="23">
    <source>
        <dbReference type="PDB" id="5FJP"/>
    </source>
</evidence>
<evidence type="ECO:0007744" key="24">
    <source>
        <dbReference type="PDB" id="5FJR"/>
    </source>
</evidence>
<evidence type="ECO:0007744" key="25">
    <source>
        <dbReference type="PDB" id="5FJT"/>
    </source>
</evidence>
<evidence type="ECO:0007744" key="26">
    <source>
        <dbReference type="PDB" id="5FJU"/>
    </source>
</evidence>
<evidence type="ECO:0007829" key="27">
    <source>
        <dbReference type="PDB" id="1SJD"/>
    </source>
</evidence>
<evidence type="ECO:0007829" key="28">
    <source>
        <dbReference type="PDB" id="4A6G"/>
    </source>
</evidence>
<name>NSAR_AMYSP</name>
<reference key="1">
    <citation type="journal article" date="1995" name="Appl. Microbiol. Biotechnol.">
        <title>Cloning, DNA sequencing and heterologous expression of the gene for thermostable N-acylamino acid racemase from Amycolatopsis sp. TS-1-60 in Escherichia coli.</title>
        <authorList>
            <person name="Tokuyama S."/>
            <person name="Hatano K."/>
        </authorList>
    </citation>
    <scope>NUCLEOTIDE SEQUENCE [GENOMIC DNA]</scope>
    <source>
        <strain>TS-1-60</strain>
    </source>
</reference>
<reference key="2">
    <citation type="journal article" date="1995" name="Appl. Microbiol. Biotechnol.">
        <title>Purification and properties of thermostable N-acylamino acid racemase from Amycolatopsis sp. TS-1-60.</title>
        <authorList>
            <person name="Tokuyama S."/>
            <person name="Hatano K."/>
        </authorList>
    </citation>
    <scope>PROTEIN SEQUENCE OF 1-24</scope>
    <scope>FUNCTION AS A RACEMASE</scope>
    <scope>CATALYTIC ACTIVITY</scope>
    <scope>COFACTOR</scope>
    <scope>ACTIVITY REGULATION</scope>
    <scope>BIOPHYSICOCHEMICAL PROPERTIES</scope>
    <scope>SUBUNIT</scope>
    <source>
        <strain>TS-1-60</strain>
    </source>
</reference>
<reference key="3">
    <citation type="journal article" date="1999" name="Biochemistry">
        <title>Unexpected divergence of enzyme function and sequence: 'N-acylamino acid racemase' is o-succinylbenzoate synthase.</title>
        <authorList>
            <person name="Palmer D.R."/>
            <person name="Garrett J.B."/>
            <person name="Sharma V."/>
            <person name="Meganathan R."/>
            <person name="Babbitt P.C."/>
            <person name="Gerlt J.A."/>
        </authorList>
    </citation>
    <scope>FUNCTION</scope>
    <scope>CATALYTIC ACTIVITY</scope>
    <scope>ACTIVITY REGULATION</scope>
    <scope>BIOPHYSICOCHEMICAL PROPERTIES</scope>
    <scope>MUTAGENESIS OF LYS-163 AND LYS-263</scope>
    <source>
        <strain>TS-1-60</strain>
    </source>
</reference>
<reference key="4">
    <citation type="journal article" date="2004" name="Biochemistry">
        <title>Evolution of enzymatic activity in the enolase superfamily: functional studies of the promiscuous o-succinylbenzoate synthase from Amycolatopsis.</title>
        <authorList>
            <person name="Taylor Ringia E.A."/>
            <person name="Garrett J.B."/>
            <person name="Thoden J.B."/>
            <person name="Holden H.M."/>
            <person name="Rayment I."/>
            <person name="Gerlt J.A."/>
        </authorList>
    </citation>
    <scope>FUNCTION</scope>
    <scope>CATALYTIC ACTIVITY</scope>
    <scope>BIOPHYSICOCHEMICAL PROPERTIES</scope>
    <scope>ACTIVE SITES</scope>
    <scope>MUTAGENESIS OF LYS-163 AND LYS-263</scope>
    <source>
        <strain>TS-1-60</strain>
    </source>
</reference>
<reference key="5">
    <citation type="journal article" date="2006" name="J. Mol. Biol.">
        <title>Evolution of structure and function in the o-succinylbenzoate synthase/N-acylamino acid racemase family of the enolase superfamily.</title>
        <authorList>
            <person name="Glasner M.E."/>
            <person name="Fayazmanesh N."/>
            <person name="Chiang R.A."/>
            <person name="Sakai A."/>
            <person name="Jacobson M.P."/>
            <person name="Gerlt J.A."/>
            <person name="Babbitt P.C."/>
        </authorList>
    </citation>
    <scope>FUNCTION</scope>
    <scope>EVOLUTION OF THE O-SUCCINYLBENZOATE SYNTHASE/N-ACYLAMINO ACID RACEMASE FAMILY</scope>
</reference>
<reference key="6">
    <citation type="journal article" date="2014" name="Biochemistry">
        <title>Role of an active site loop in the promiscuous activities of Amycolatopsis sp. T-1-60 NSAR/OSBS.</title>
        <authorList>
            <person name="McMillan A.W."/>
            <person name="Lopez M.S."/>
            <person name="Zhu M."/>
            <person name="Morse B.C."/>
            <person name="Yeo I.C."/>
            <person name="Amos J."/>
            <person name="Hull K."/>
            <person name="Romo D."/>
            <person name="Glasner M.E."/>
        </authorList>
    </citation>
    <scope>FUNCTION</scope>
    <scope>CATALYTIC ACTIVITY</scope>
    <scope>BIOPHYSICOCHEMICAL PROPERTIES</scope>
    <scope>MUTAGENESIS OF PRO-18; PHE-19; ARG-20; THR-21; SER-22; PHE-23; GLY-24 AND ASP-140</scope>
    <source>
        <strain>TS-1-60</strain>
    </source>
</reference>
<reference evidence="17 18 19 20" key="7">
    <citation type="journal article" date="2004" name="Biochemistry">
        <title>Evolution of enzymatic activity in the enolase superfamily: structural studies of the promiscuous o-succinylbenzoate synthase from Amycolatopsis.</title>
        <authorList>
            <person name="Thoden J.B."/>
            <person name="Taylor Ringia E.A."/>
            <person name="Garrett J.B."/>
            <person name="Gerlt J.A."/>
            <person name="Holden H.M."/>
            <person name="Rayment I."/>
        </authorList>
    </citation>
    <scope>X-RAY CRYSTALLOGRAPHY (1.87 ANGSTROMS) IN COMPLEXES WITH 2-SUCCINYLBENZOIC ACID; N-ACETYL-METHIONINE; N-SUCCINYL-METHIONINE; N-SUCCINYL-PHENYLGLYCINE AND MAGNESIUM</scope>
    <scope>COFACTOR</scope>
    <scope>SUBUNIT</scope>
    <scope>DOMAIN</scope>
    <scope>ACTIVE SITES</scope>
    <source>
        <strain>TS-1-60</strain>
    </source>
</reference>
<reference evidence="21" key="8">
    <citation type="journal article" date="2012" name="J. Am. Chem. Soc.">
        <title>An improved racemase/acylase biotransformation for the preparation of enantiomerically pure amino acids.</title>
        <authorList>
            <person name="Baxter S."/>
            <person name="Royer S."/>
            <person name="Grogan G."/>
            <person name="Brown F."/>
            <person name="Holt-Tiffin K.E."/>
            <person name="Taylor I.N."/>
            <person name="Fotheringham I.G."/>
            <person name="Campopiano D.J."/>
        </authorList>
    </citation>
    <scope>X-RAY CRYSTALLOGRAPHY (2.71 ANGSTROMS) OF MUTANT ASP-291/TYR-323 IN COMPLEX WITH N-ACETYL-METHIONINE AND MAGNESIUM</scope>
    <scope>FUNCTION AS A RACEMASE</scope>
    <scope>CATALYTIC ACTIVITY</scope>
    <scope>BIOPHYSICOCHEMICAL PROPERTIES</scope>
    <scope>BIOTECHNOLOGY</scope>
    <scope>MUTAGENESIS OF GLY-291 AND PHE-323</scope>
    <source>
        <strain>TS-1-60</strain>
    </source>
</reference>
<reference evidence="22 23 24 25 26" key="9">
    <citation type="submission" date="2015-10" db="PDB data bank">
        <title>Structure of N-Acylamino Acid Racemase Mutants in Complex with Substrates.</title>
        <authorList>
            <person name="Sanchez-Carron G."/>
            <person name="Campopiano D."/>
            <person name="Grogan G."/>
        </authorList>
    </citation>
    <scope>X-RAY CRYSTALLOGRAPHY (2.08 ANGSTROMS) OF MUTANTS IN COMPLEXES WITH N-ACETYL NAPHTHYLALANINE; N-ACETYL PHENYLALANINE AND MAGNESIUM</scope>
    <source>
        <strain>TS-1-60</strain>
    </source>
</reference>
<accession>Q44244</accession>
<proteinExistence type="evidence at protein level"/>